<evidence type="ECO:0000255" key="1">
    <source>
        <dbReference type="HAMAP-Rule" id="MF_00236"/>
    </source>
</evidence>
<evidence type="ECO:0000256" key="2">
    <source>
        <dbReference type="SAM" id="MobiDB-lite"/>
    </source>
</evidence>
<keyword id="KW-0997">Cell inner membrane</keyword>
<keyword id="KW-1003">Cell membrane</keyword>
<keyword id="KW-0472">Membrane</keyword>
<keyword id="KW-0653">Protein transport</keyword>
<keyword id="KW-0811">Translocation</keyword>
<keyword id="KW-0812">Transmembrane</keyword>
<keyword id="KW-1133">Transmembrane helix</keyword>
<keyword id="KW-0813">Transport</keyword>
<proteinExistence type="inferred from homology"/>
<organism>
    <name type="scientific">Vibrio campbellii (strain ATCC BAA-1116)</name>
    <dbReference type="NCBI Taxonomy" id="2902295"/>
    <lineage>
        <taxon>Bacteria</taxon>
        <taxon>Pseudomonadati</taxon>
        <taxon>Pseudomonadota</taxon>
        <taxon>Gammaproteobacteria</taxon>
        <taxon>Vibrionales</taxon>
        <taxon>Vibrionaceae</taxon>
        <taxon>Vibrio</taxon>
    </lineage>
</organism>
<name>TATA_VIBC1</name>
<protein>
    <recommendedName>
        <fullName evidence="1">Sec-independent protein translocase protein TatA</fullName>
    </recommendedName>
</protein>
<comment type="function">
    <text evidence="1">Part of the twin-arginine translocation (Tat) system that transports large folded proteins containing a characteristic twin-arginine motif in their signal peptide across membranes. TatA could form the protein-conducting channel of the Tat system.</text>
</comment>
<comment type="subunit">
    <text evidence="1">The Tat system comprises two distinct complexes: a TatABC complex, containing multiple copies of TatA, TatB and TatC subunits, and a separate TatA complex, containing only TatA subunits. Substrates initially bind to the TatABC complex, which probably triggers association of the separate TatA complex to form the active translocon.</text>
</comment>
<comment type="subcellular location">
    <subcellularLocation>
        <location evidence="1">Cell inner membrane</location>
        <topology evidence="1">Single-pass membrane protein</topology>
    </subcellularLocation>
</comment>
<comment type="similarity">
    <text evidence="1">Belongs to the TatA/E family.</text>
</comment>
<gene>
    <name evidence="1" type="primary">tatA</name>
    <name type="ordered locus">VIBHAR_00565</name>
</gene>
<reference key="1">
    <citation type="submission" date="2007-08" db="EMBL/GenBank/DDBJ databases">
        <authorList>
            <consortium name="The Vibrio harveyi Genome Sequencing Project"/>
            <person name="Bassler B."/>
            <person name="Clifton S.W."/>
            <person name="Fulton L."/>
            <person name="Delehaunty K."/>
            <person name="Fronick C."/>
            <person name="Harrison M."/>
            <person name="Markivic C."/>
            <person name="Fulton R."/>
            <person name="Tin-Wollam A.-M."/>
            <person name="Shah N."/>
            <person name="Pepin K."/>
            <person name="Nash W."/>
            <person name="Thiruvilangam P."/>
            <person name="Bhonagiri V."/>
            <person name="Waters C."/>
            <person name="Tu K.C."/>
            <person name="Irgon J."/>
            <person name="Wilson R.K."/>
        </authorList>
    </citation>
    <scope>NUCLEOTIDE SEQUENCE [LARGE SCALE GENOMIC DNA]</scope>
    <source>
        <strain>ATCC BAA-1116 / BB120</strain>
    </source>
</reference>
<feature type="chain" id="PRO_1000044457" description="Sec-independent protein translocase protein TatA">
    <location>
        <begin position="1"/>
        <end position="82"/>
    </location>
</feature>
<feature type="transmembrane region" description="Helical" evidence="1">
    <location>
        <begin position="1"/>
        <end position="21"/>
    </location>
</feature>
<feature type="region of interest" description="Disordered" evidence="2">
    <location>
        <begin position="41"/>
        <end position="82"/>
    </location>
</feature>
<feature type="compositionally biased region" description="Basic and acidic residues" evidence="2">
    <location>
        <begin position="42"/>
        <end position="82"/>
    </location>
</feature>
<sequence>MGGISVWQLLIIAVIVVLLFGTKKLRGIGGDLGGAVKGFKKAMSEDEPAKKDDKDADFEPKSLEEQQKKEAAPESKKDKEQA</sequence>
<dbReference type="EMBL" id="CP000789">
    <property type="protein sequence ID" value="ABU69568.1"/>
    <property type="molecule type" value="Genomic_DNA"/>
</dbReference>
<dbReference type="RefSeq" id="WP_005429959.1">
    <property type="nucleotide sequence ID" value="NC_022269.1"/>
</dbReference>
<dbReference type="SMR" id="A7MZB7"/>
<dbReference type="GeneID" id="83583269"/>
<dbReference type="KEGG" id="vha:VIBHAR_00565"/>
<dbReference type="PATRIC" id="fig|338187.25.peg.2047"/>
<dbReference type="Proteomes" id="UP000008152">
    <property type="component" value="Chromosome I"/>
</dbReference>
<dbReference type="GO" id="GO:0033281">
    <property type="term" value="C:TAT protein transport complex"/>
    <property type="evidence" value="ECO:0007669"/>
    <property type="project" value="UniProtKB-UniRule"/>
</dbReference>
<dbReference type="GO" id="GO:0008320">
    <property type="term" value="F:protein transmembrane transporter activity"/>
    <property type="evidence" value="ECO:0007669"/>
    <property type="project" value="UniProtKB-UniRule"/>
</dbReference>
<dbReference type="GO" id="GO:0043953">
    <property type="term" value="P:protein transport by the Tat complex"/>
    <property type="evidence" value="ECO:0007669"/>
    <property type="project" value="UniProtKB-UniRule"/>
</dbReference>
<dbReference type="Gene3D" id="1.20.5.3310">
    <property type="match status" value="1"/>
</dbReference>
<dbReference type="HAMAP" id="MF_00236">
    <property type="entry name" value="TatA_E"/>
    <property type="match status" value="1"/>
</dbReference>
<dbReference type="InterPro" id="IPR003369">
    <property type="entry name" value="TatA/B/E"/>
</dbReference>
<dbReference type="InterPro" id="IPR006312">
    <property type="entry name" value="TatA/E"/>
</dbReference>
<dbReference type="NCBIfam" id="NF002813">
    <property type="entry name" value="PRK02958.1"/>
    <property type="match status" value="1"/>
</dbReference>
<dbReference type="NCBIfam" id="NF003396">
    <property type="entry name" value="PRK04598.1"/>
    <property type="match status" value="1"/>
</dbReference>
<dbReference type="NCBIfam" id="TIGR01411">
    <property type="entry name" value="tatAE"/>
    <property type="match status" value="1"/>
</dbReference>
<dbReference type="PANTHER" id="PTHR42982">
    <property type="entry name" value="SEC-INDEPENDENT PROTEIN TRANSLOCASE PROTEIN TATA"/>
    <property type="match status" value="1"/>
</dbReference>
<dbReference type="PANTHER" id="PTHR42982:SF1">
    <property type="entry name" value="SEC-INDEPENDENT PROTEIN TRANSLOCASE PROTEIN TATA"/>
    <property type="match status" value="1"/>
</dbReference>
<dbReference type="Pfam" id="PF02416">
    <property type="entry name" value="TatA_B_E"/>
    <property type="match status" value="1"/>
</dbReference>
<accession>A7MZB7</accession>